<comment type="function">
    <text evidence="1">Part of the ABC transporter complex RbsABC involved in ribose import. Responsible for energy coupling to the transport system.</text>
</comment>
<comment type="catalytic activity">
    <reaction evidence="1">
        <text>D-ribose(out) + ATP + H2O = D-ribose(in) + ADP + phosphate + H(+)</text>
        <dbReference type="Rhea" id="RHEA:29903"/>
        <dbReference type="ChEBI" id="CHEBI:15377"/>
        <dbReference type="ChEBI" id="CHEBI:15378"/>
        <dbReference type="ChEBI" id="CHEBI:30616"/>
        <dbReference type="ChEBI" id="CHEBI:43474"/>
        <dbReference type="ChEBI" id="CHEBI:47013"/>
        <dbReference type="ChEBI" id="CHEBI:456216"/>
        <dbReference type="EC" id="7.5.2.7"/>
    </reaction>
</comment>
<comment type="subunit">
    <text evidence="1">The complex is composed of an ATP-binding protein (RbsA), two transmembrane proteins (RbsC) and a solute-binding protein (RbsB).</text>
</comment>
<comment type="subcellular location">
    <subcellularLocation>
        <location evidence="1">Cell membrane</location>
        <topology evidence="1">Peripheral membrane protein</topology>
    </subcellularLocation>
</comment>
<comment type="similarity">
    <text evidence="1">Belongs to the ABC transporter superfamily. Ribose importer (TC 3.A.1.2.1) family.</text>
</comment>
<name>RBSA_BACCZ</name>
<reference key="1">
    <citation type="journal article" date="2006" name="J. Bacteriol.">
        <title>Pathogenomic sequence analysis of Bacillus cereus and Bacillus thuringiensis isolates closely related to Bacillus anthracis.</title>
        <authorList>
            <person name="Han C.S."/>
            <person name="Xie G."/>
            <person name="Challacombe J.F."/>
            <person name="Altherr M.R."/>
            <person name="Bhotika S.S."/>
            <person name="Bruce D."/>
            <person name="Campbell C.S."/>
            <person name="Campbell M.L."/>
            <person name="Chen J."/>
            <person name="Chertkov O."/>
            <person name="Cleland C."/>
            <person name="Dimitrijevic M."/>
            <person name="Doggett N.A."/>
            <person name="Fawcett J.J."/>
            <person name="Glavina T."/>
            <person name="Goodwin L.A."/>
            <person name="Hill K.K."/>
            <person name="Hitchcock P."/>
            <person name="Jackson P.J."/>
            <person name="Keim P."/>
            <person name="Kewalramani A.R."/>
            <person name="Longmire J."/>
            <person name="Lucas S."/>
            <person name="Malfatti S."/>
            <person name="McMurry K."/>
            <person name="Meincke L.J."/>
            <person name="Misra M."/>
            <person name="Moseman B.L."/>
            <person name="Mundt M."/>
            <person name="Munk A.C."/>
            <person name="Okinaka R.T."/>
            <person name="Parson-Quintana B."/>
            <person name="Reilly L.P."/>
            <person name="Richardson P."/>
            <person name="Robinson D.L."/>
            <person name="Rubin E."/>
            <person name="Saunders E."/>
            <person name="Tapia R."/>
            <person name="Tesmer J.G."/>
            <person name="Thayer N."/>
            <person name="Thompson L.S."/>
            <person name="Tice H."/>
            <person name="Ticknor L.O."/>
            <person name="Wills P.L."/>
            <person name="Brettin T.S."/>
            <person name="Gilna P."/>
        </authorList>
    </citation>
    <scope>NUCLEOTIDE SEQUENCE [LARGE SCALE GENOMIC DNA]</scope>
    <source>
        <strain>ZK / E33L</strain>
    </source>
</reference>
<accession>Q63FX9</accession>
<protein>
    <recommendedName>
        <fullName evidence="1">Ribose import ATP-binding protein RbsA</fullName>
        <ecNumber evidence="1">7.5.2.7</ecNumber>
    </recommendedName>
</protein>
<sequence>MRIEMKNISKAFNGNPVLKNAQFMIETGEVHALMGENGAGKSTLMKILTGVYKRDGGTITIDGQERTFKNAKEAEEYGIAFIHQELNILPNLTVAENMFLGKELMYGKTGILRTRQMNAIAQQQLAELGLHVKGAMLAGELSVGQQQIIEIAKALMTNASVIIMDEPTAALTDREIETLFTVINKLRKEGVSFVYISHRMEEIFSICDAITILRDGEYVGKRSIPETSFDEVVSMMVGRSIGERYPERNSQISDVIFEMRNGTKKGKFENVSFQVRKGEILGVAGLMGAGRTDIMKSIFGYEPLDSGQIFINGQEVKIDSPIDAIRQRIAFITEDRKSEGLVLDFSIRENLALPNLESLSKGSVLSNELEQQFTADMMKLLNVKASSGEQAVKSLSGGNQQKVVIAKWLGIHPQLLILDEPTRGVDVGAKKEIYSIMNKLTEEGDAVIMVSSELPEVLGMSDRVLVIHEGKVGGILEKDEASQESIMALATGGE</sequence>
<evidence type="ECO:0000255" key="1">
    <source>
        <dbReference type="HAMAP-Rule" id="MF_01716"/>
    </source>
</evidence>
<feature type="chain" id="PRO_0000261039" description="Ribose import ATP-binding protein RbsA">
    <location>
        <begin position="1"/>
        <end position="494"/>
    </location>
</feature>
<feature type="domain" description="ABC transporter 1" evidence="1">
    <location>
        <begin position="3"/>
        <end position="240"/>
    </location>
</feature>
<feature type="domain" description="ABC transporter 2" evidence="1">
    <location>
        <begin position="250"/>
        <end position="494"/>
    </location>
</feature>
<feature type="binding site" evidence="1">
    <location>
        <begin position="35"/>
        <end position="42"/>
    </location>
    <ligand>
        <name>ATP</name>
        <dbReference type="ChEBI" id="CHEBI:30616"/>
    </ligand>
</feature>
<organism>
    <name type="scientific">Bacillus cereus (strain ZK / E33L)</name>
    <dbReference type="NCBI Taxonomy" id="288681"/>
    <lineage>
        <taxon>Bacteria</taxon>
        <taxon>Bacillati</taxon>
        <taxon>Bacillota</taxon>
        <taxon>Bacilli</taxon>
        <taxon>Bacillales</taxon>
        <taxon>Bacillaceae</taxon>
        <taxon>Bacillus</taxon>
        <taxon>Bacillus cereus group</taxon>
    </lineage>
</organism>
<proteinExistence type="inferred from homology"/>
<gene>
    <name evidence="1" type="primary">rbsA</name>
    <name type="ordered locus">BCE33L0577</name>
</gene>
<dbReference type="EC" id="7.5.2.7" evidence="1"/>
<dbReference type="EMBL" id="CP000001">
    <property type="protein sequence ID" value="AAU19665.1"/>
    <property type="molecule type" value="Genomic_DNA"/>
</dbReference>
<dbReference type="RefSeq" id="WP_001217686.1">
    <property type="nucleotide sequence ID" value="NC_006274.1"/>
</dbReference>
<dbReference type="SMR" id="Q63FX9"/>
<dbReference type="KEGG" id="bcz:BCE33L0577"/>
<dbReference type="PATRIC" id="fig|288681.22.peg.5015"/>
<dbReference type="Proteomes" id="UP000002612">
    <property type="component" value="Chromosome"/>
</dbReference>
<dbReference type="GO" id="GO:0005886">
    <property type="term" value="C:plasma membrane"/>
    <property type="evidence" value="ECO:0007669"/>
    <property type="project" value="UniProtKB-SubCell"/>
</dbReference>
<dbReference type="GO" id="GO:0015611">
    <property type="term" value="F:ABC-type D-ribose transporter activity"/>
    <property type="evidence" value="ECO:0007669"/>
    <property type="project" value="UniProtKB-EC"/>
</dbReference>
<dbReference type="GO" id="GO:0005524">
    <property type="term" value="F:ATP binding"/>
    <property type="evidence" value="ECO:0007669"/>
    <property type="project" value="UniProtKB-KW"/>
</dbReference>
<dbReference type="GO" id="GO:0016887">
    <property type="term" value="F:ATP hydrolysis activity"/>
    <property type="evidence" value="ECO:0007669"/>
    <property type="project" value="InterPro"/>
</dbReference>
<dbReference type="CDD" id="cd03216">
    <property type="entry name" value="ABC_Carb_Monos_I"/>
    <property type="match status" value="1"/>
</dbReference>
<dbReference type="CDD" id="cd03215">
    <property type="entry name" value="ABC_Carb_Monos_II"/>
    <property type="match status" value="1"/>
</dbReference>
<dbReference type="FunFam" id="3.40.50.300:FF:000126">
    <property type="entry name" value="Galactose/methyl galactoside import ATP-binding protein MglA"/>
    <property type="match status" value="1"/>
</dbReference>
<dbReference type="FunFam" id="3.40.50.300:FF:000127">
    <property type="entry name" value="Ribose import ATP-binding protein RbsA"/>
    <property type="match status" value="1"/>
</dbReference>
<dbReference type="Gene3D" id="3.40.50.300">
    <property type="entry name" value="P-loop containing nucleotide triphosphate hydrolases"/>
    <property type="match status" value="2"/>
</dbReference>
<dbReference type="InterPro" id="IPR003593">
    <property type="entry name" value="AAA+_ATPase"/>
</dbReference>
<dbReference type="InterPro" id="IPR050107">
    <property type="entry name" value="ABC_carbohydrate_import_ATPase"/>
</dbReference>
<dbReference type="InterPro" id="IPR003439">
    <property type="entry name" value="ABC_transporter-like_ATP-bd"/>
</dbReference>
<dbReference type="InterPro" id="IPR017871">
    <property type="entry name" value="ABC_transporter-like_CS"/>
</dbReference>
<dbReference type="InterPro" id="IPR027417">
    <property type="entry name" value="P-loop_NTPase"/>
</dbReference>
<dbReference type="PANTHER" id="PTHR43790">
    <property type="entry name" value="CARBOHYDRATE TRANSPORT ATP-BINDING PROTEIN MG119-RELATED"/>
    <property type="match status" value="1"/>
</dbReference>
<dbReference type="PANTHER" id="PTHR43790:SF3">
    <property type="entry name" value="D-ALLOSE IMPORT ATP-BINDING PROTEIN ALSA-RELATED"/>
    <property type="match status" value="1"/>
</dbReference>
<dbReference type="Pfam" id="PF00005">
    <property type="entry name" value="ABC_tran"/>
    <property type="match status" value="2"/>
</dbReference>
<dbReference type="SMART" id="SM00382">
    <property type="entry name" value="AAA"/>
    <property type="match status" value="2"/>
</dbReference>
<dbReference type="SUPFAM" id="SSF52540">
    <property type="entry name" value="P-loop containing nucleoside triphosphate hydrolases"/>
    <property type="match status" value="2"/>
</dbReference>
<dbReference type="PROSITE" id="PS00211">
    <property type="entry name" value="ABC_TRANSPORTER_1"/>
    <property type="match status" value="1"/>
</dbReference>
<dbReference type="PROSITE" id="PS50893">
    <property type="entry name" value="ABC_TRANSPORTER_2"/>
    <property type="match status" value="2"/>
</dbReference>
<dbReference type="PROSITE" id="PS51254">
    <property type="entry name" value="RBSA"/>
    <property type="match status" value="1"/>
</dbReference>
<keyword id="KW-0067">ATP-binding</keyword>
<keyword id="KW-1003">Cell membrane</keyword>
<keyword id="KW-0472">Membrane</keyword>
<keyword id="KW-0547">Nucleotide-binding</keyword>
<keyword id="KW-0677">Repeat</keyword>
<keyword id="KW-0762">Sugar transport</keyword>
<keyword id="KW-1278">Translocase</keyword>
<keyword id="KW-0813">Transport</keyword>